<feature type="chain" id="PRO_0000378273" description="Putative cysteine ligase BshC">
    <location>
        <begin position="1"/>
        <end position="484"/>
    </location>
</feature>
<feature type="coiled-coil region" evidence="1">
    <location>
        <begin position="372"/>
        <end position="435"/>
    </location>
</feature>
<gene>
    <name evidence="1" type="primary">bshC</name>
    <name type="ordered locus">TTHA1566</name>
</gene>
<protein>
    <recommendedName>
        <fullName evidence="1">Putative cysteine ligase BshC</fullName>
        <ecNumber evidence="1">6.-.-.-</ecNumber>
    </recommendedName>
</protein>
<sequence>MEAACLVRSLGLPQGEEALKARLRRPGHPRLREALAAYLKRLQAPEEAFRALERLEVGAVVTGQQAGLLGGPALTFYKAHTALCLADRAGAAGVFWVASQDHDVEEVRHLHLLRDEVPETLSLDLPPLPSGRIPLAPHRERLRAFLGPWAKDYRLGYALEAETLSEFFARVLLAFLGERGLVPFDPMAEELAPLFLEALERELSDPLGSAEAINREAERIRALGGKPPLRRKPGATNLFLETDQRRLLFYEGGAFTDGVRRYTAKELWEIARADPSRLTPAAGLRPVFQDLVLPTAGFVVGPNELRYVAELSGVYARYGLAMPALFLRAFGVVVEPPVRRILEKYRLDPWAFVDEGEAAFLRAAEAWLAPFRAFRDRVEGLLQEASRLVEEAEALEPNLVRPLRRFRARVGGEAERLRRKLLAAQAARDEVLARHLGRLKVHLLPFGLPQERVYPYAMYALRHGEALRRLAEAPWEGRVALYLG</sequence>
<evidence type="ECO:0000255" key="1">
    <source>
        <dbReference type="HAMAP-Rule" id="MF_01867"/>
    </source>
</evidence>
<dbReference type="EC" id="6.-.-.-" evidence="1"/>
<dbReference type="EMBL" id="AP008226">
    <property type="protein sequence ID" value="BAD71389.1"/>
    <property type="molecule type" value="Genomic_DNA"/>
</dbReference>
<dbReference type="RefSeq" id="WP_011228769.1">
    <property type="nucleotide sequence ID" value="NC_006461.1"/>
</dbReference>
<dbReference type="RefSeq" id="YP_144832.1">
    <property type="nucleotide sequence ID" value="NC_006461.1"/>
</dbReference>
<dbReference type="SMR" id="Q5SI14"/>
<dbReference type="EnsemblBacteria" id="BAD71389">
    <property type="protein sequence ID" value="BAD71389"/>
    <property type="gene ID" value="BAD71389"/>
</dbReference>
<dbReference type="GeneID" id="3169940"/>
<dbReference type="KEGG" id="ttj:TTHA1566"/>
<dbReference type="PATRIC" id="fig|300852.9.peg.1537"/>
<dbReference type="eggNOG" id="COG4365">
    <property type="taxonomic scope" value="Bacteria"/>
</dbReference>
<dbReference type="HOGENOM" id="CLU_022249_1_0_0"/>
<dbReference type="PhylomeDB" id="Q5SI14"/>
<dbReference type="Proteomes" id="UP000000532">
    <property type="component" value="Chromosome"/>
</dbReference>
<dbReference type="GO" id="GO:0016874">
    <property type="term" value="F:ligase activity"/>
    <property type="evidence" value="ECO:0007669"/>
    <property type="project" value="UniProtKB-UniRule"/>
</dbReference>
<dbReference type="HAMAP" id="MF_01867">
    <property type="entry name" value="BshC"/>
    <property type="match status" value="1"/>
</dbReference>
<dbReference type="InterPro" id="IPR011199">
    <property type="entry name" value="Bacillithiol_biosynth_BshC"/>
</dbReference>
<dbReference type="InterPro" id="IPR055399">
    <property type="entry name" value="CC_BshC"/>
</dbReference>
<dbReference type="InterPro" id="IPR055398">
    <property type="entry name" value="Rossmann-like_BshC"/>
</dbReference>
<dbReference type="NCBIfam" id="TIGR03998">
    <property type="entry name" value="thiol_BshC"/>
    <property type="match status" value="1"/>
</dbReference>
<dbReference type="Pfam" id="PF24850">
    <property type="entry name" value="CC_BshC"/>
    <property type="match status" value="1"/>
</dbReference>
<dbReference type="Pfam" id="PF10079">
    <property type="entry name" value="Rossmann-like_BshC"/>
    <property type="match status" value="1"/>
</dbReference>
<reference key="1">
    <citation type="submission" date="2004-11" db="EMBL/GenBank/DDBJ databases">
        <title>Complete genome sequence of Thermus thermophilus HB8.</title>
        <authorList>
            <person name="Masui R."/>
            <person name="Kurokawa K."/>
            <person name="Nakagawa N."/>
            <person name="Tokunaga F."/>
            <person name="Koyama Y."/>
            <person name="Shibata T."/>
            <person name="Oshima T."/>
            <person name="Yokoyama S."/>
            <person name="Yasunaga T."/>
            <person name="Kuramitsu S."/>
        </authorList>
    </citation>
    <scope>NUCLEOTIDE SEQUENCE [LARGE SCALE GENOMIC DNA]</scope>
    <source>
        <strain>ATCC 27634 / DSM 579 / HB8</strain>
    </source>
</reference>
<keyword id="KW-0175">Coiled coil</keyword>
<keyword id="KW-0436">Ligase</keyword>
<keyword id="KW-1185">Reference proteome</keyword>
<accession>Q5SI14</accession>
<comment type="similarity">
    <text evidence="1">Belongs to the BshC family.</text>
</comment>
<proteinExistence type="inferred from homology"/>
<organism>
    <name type="scientific">Thermus thermophilus (strain ATCC 27634 / DSM 579 / HB8)</name>
    <dbReference type="NCBI Taxonomy" id="300852"/>
    <lineage>
        <taxon>Bacteria</taxon>
        <taxon>Thermotogati</taxon>
        <taxon>Deinococcota</taxon>
        <taxon>Deinococci</taxon>
        <taxon>Thermales</taxon>
        <taxon>Thermaceae</taxon>
        <taxon>Thermus</taxon>
    </lineage>
</organism>
<name>BSHC_THET8</name>